<protein>
    <recommendedName>
        <fullName>Histone H2A.4</fullName>
    </recommendedName>
</protein>
<evidence type="ECO:0000250" key="1"/>
<evidence type="ECO:0000269" key="2">
    <source>
    </source>
</evidence>
<evidence type="ECO:0000305" key="3"/>
<accession>Q43208</accession>
<organism>
    <name type="scientific">Triticum aestivum</name>
    <name type="common">Wheat</name>
    <dbReference type="NCBI Taxonomy" id="4565"/>
    <lineage>
        <taxon>Eukaryota</taxon>
        <taxon>Viridiplantae</taxon>
        <taxon>Streptophyta</taxon>
        <taxon>Embryophyta</taxon>
        <taxon>Tracheophyta</taxon>
        <taxon>Spermatophyta</taxon>
        <taxon>Magnoliopsida</taxon>
        <taxon>Liliopsida</taxon>
        <taxon>Poales</taxon>
        <taxon>Poaceae</taxon>
        <taxon>BOP clade</taxon>
        <taxon>Pooideae</taxon>
        <taxon>Triticodae</taxon>
        <taxon>Triticeae</taxon>
        <taxon>Triticinae</taxon>
        <taxon>Triticum</taxon>
    </lineage>
</organism>
<sequence length="135" mass="14102">MAGRGKAIGAGAAKKATSRSSKAGLQFPVGRIARFLKAGKYAERVGAGAPVYLAAVLEYLAAEVLELAGNAARDNKKTRIVPRHIQLAVRNDEELTKLLGGATIASGGVMPNIHQHLLPKKASSSKVSTVDDDDN</sequence>
<comment type="function">
    <text>Core component of nucleosome. Nucleosomes wrap and compact DNA into chromatin, limiting DNA accessibility to the cellular machineries which require DNA as a template. Histones thereby play a central role in transcription regulation, DNA repair, DNA replication and chromosomal stability. DNA accessibility is regulated via a complex set of post-translational modifications of histones, also called histone code, and nucleosome remodeling.</text>
</comment>
<comment type="subunit">
    <text>The nucleosome is a histone octamer containing two molecules each of H2A, H2B, H3 and H4 assembled in one H3-H4 heterotetramer and two H2A-H2B heterodimers. The octamer wraps approximately 147 bp of DNA.</text>
</comment>
<comment type="subcellular location">
    <subcellularLocation>
        <location evidence="1">Nucleus</location>
    </subcellularLocation>
    <subcellularLocation>
        <location evidence="1">Chromosome</location>
    </subcellularLocation>
</comment>
<comment type="tissue specificity">
    <text evidence="2">Expressed preferentially in meristematic tissues of young seedlings, in stigma and ovary but not in pollen.</text>
</comment>
<comment type="developmental stage">
    <text evidence="2">S phase-specific expression.</text>
</comment>
<comment type="similarity">
    <text evidence="3">Belongs to the histone H2A family.</text>
</comment>
<name>H2A4_WHEAT</name>
<dbReference type="EMBL" id="X94693">
    <property type="protein sequence ID" value="CAA64356.1"/>
    <property type="molecule type" value="Genomic_DNA"/>
</dbReference>
<dbReference type="EMBL" id="L75824">
    <property type="protein sequence ID" value="AAL40108.1"/>
    <property type="molecule type" value="Genomic_DNA"/>
</dbReference>
<dbReference type="PIR" id="T06511">
    <property type="entry name" value="T06511"/>
</dbReference>
<dbReference type="SMR" id="Q43208"/>
<dbReference type="STRING" id="4565.Q43208"/>
<dbReference type="PaxDb" id="4565-Traes_2BS_CAA1398DB.1"/>
<dbReference type="eggNOG" id="KOG1756">
    <property type="taxonomic scope" value="Eukaryota"/>
</dbReference>
<dbReference type="Proteomes" id="UP000019116">
    <property type="component" value="Unplaced"/>
</dbReference>
<dbReference type="ExpressionAtlas" id="Q43208">
    <property type="expression patterns" value="baseline and differential"/>
</dbReference>
<dbReference type="GO" id="GO:0000786">
    <property type="term" value="C:nucleosome"/>
    <property type="evidence" value="ECO:0000318"/>
    <property type="project" value="GO_Central"/>
</dbReference>
<dbReference type="GO" id="GO:0005634">
    <property type="term" value="C:nucleus"/>
    <property type="evidence" value="ECO:0000318"/>
    <property type="project" value="GO_Central"/>
</dbReference>
<dbReference type="GO" id="GO:0003677">
    <property type="term" value="F:DNA binding"/>
    <property type="evidence" value="ECO:0007669"/>
    <property type="project" value="UniProtKB-KW"/>
</dbReference>
<dbReference type="GO" id="GO:0046982">
    <property type="term" value="F:protein heterodimerization activity"/>
    <property type="evidence" value="ECO:0007669"/>
    <property type="project" value="InterPro"/>
</dbReference>
<dbReference type="GO" id="GO:0030527">
    <property type="term" value="F:structural constituent of chromatin"/>
    <property type="evidence" value="ECO:0000318"/>
    <property type="project" value="GO_Central"/>
</dbReference>
<dbReference type="GO" id="GO:0031507">
    <property type="term" value="P:heterochromatin formation"/>
    <property type="evidence" value="ECO:0000318"/>
    <property type="project" value="GO_Central"/>
</dbReference>
<dbReference type="CDD" id="cd00074">
    <property type="entry name" value="HFD_H2A"/>
    <property type="match status" value="1"/>
</dbReference>
<dbReference type="FunFam" id="1.10.20.10:FF:000009">
    <property type="entry name" value="Histone H2A"/>
    <property type="match status" value="1"/>
</dbReference>
<dbReference type="Gene3D" id="1.10.20.10">
    <property type="entry name" value="Histone, subunit A"/>
    <property type="match status" value="1"/>
</dbReference>
<dbReference type="InterPro" id="IPR009072">
    <property type="entry name" value="Histone-fold"/>
</dbReference>
<dbReference type="InterPro" id="IPR002119">
    <property type="entry name" value="Histone_H2A"/>
</dbReference>
<dbReference type="InterPro" id="IPR007125">
    <property type="entry name" value="Histone_H2A/H2B/H3"/>
</dbReference>
<dbReference type="InterPro" id="IPR032454">
    <property type="entry name" value="Histone_H2A_C"/>
</dbReference>
<dbReference type="InterPro" id="IPR032458">
    <property type="entry name" value="Histone_H2A_CS"/>
</dbReference>
<dbReference type="PANTHER" id="PTHR23430">
    <property type="entry name" value="HISTONE H2A"/>
    <property type="match status" value="1"/>
</dbReference>
<dbReference type="Pfam" id="PF00125">
    <property type="entry name" value="Histone"/>
    <property type="match status" value="1"/>
</dbReference>
<dbReference type="Pfam" id="PF16211">
    <property type="entry name" value="Histone_H2A_C"/>
    <property type="match status" value="1"/>
</dbReference>
<dbReference type="PRINTS" id="PR00620">
    <property type="entry name" value="HISTONEH2A"/>
</dbReference>
<dbReference type="SMART" id="SM00414">
    <property type="entry name" value="H2A"/>
    <property type="match status" value="1"/>
</dbReference>
<dbReference type="SUPFAM" id="SSF47113">
    <property type="entry name" value="Histone-fold"/>
    <property type="match status" value="1"/>
</dbReference>
<dbReference type="PROSITE" id="PS00046">
    <property type="entry name" value="HISTONE_H2A"/>
    <property type="match status" value="1"/>
</dbReference>
<gene>
    <name type="primary">TH254</name>
</gene>
<proteinExistence type="evidence at transcript level"/>
<keyword id="KW-0158">Chromosome</keyword>
<keyword id="KW-0238">DNA-binding</keyword>
<keyword id="KW-0544">Nucleosome core</keyword>
<keyword id="KW-0539">Nucleus</keyword>
<keyword id="KW-1185">Reference proteome</keyword>
<reference key="1">
    <citation type="journal article" date="1997" name="Plant Mol. Biol.">
        <title>Structural characteristics of two wheat histone H2A genes encoding distinct types of variants and functional differences in their promoter activity.</title>
        <authorList>
            <person name="Huh G.H."/>
            <person name="Nakayama T."/>
            <person name="Meshi T."/>
            <person name="Iwabuchi M."/>
        </authorList>
    </citation>
    <scope>NUCLEOTIDE SEQUENCE [GENOMIC DNA]</scope>
    <scope>DEVELOPMENTAL STAGE</scope>
    <scope>TISSUE SPECIFICITY</scope>
</reference>
<feature type="initiator methionine" description="Removed" evidence="1">
    <location>
        <position position="1"/>
    </location>
</feature>
<feature type="chain" id="PRO_0000244647" description="Histone H2A.4">
    <location>
        <begin position="2"/>
        <end position="135"/>
    </location>
</feature>